<keyword id="KW-0067">ATP-binding</keyword>
<keyword id="KW-0090">Biological rhythms</keyword>
<keyword id="KW-0418">Kinase</keyword>
<keyword id="KW-0547">Nucleotide-binding</keyword>
<keyword id="KW-0597">Phosphoprotein</keyword>
<keyword id="KW-0808">Transferase</keyword>
<keyword id="KW-0902">Two-component regulatory system</keyword>
<comment type="function">
    <text evidence="1">Member of the two-component regulatory system SasA/RpaA involved in genome-wide circadian gene expression. One of several clock output pathways. Participates in the Kai clock protein complex, the main circadian regulator in cyanobacteria, via its interaction with KaiC. KaiC enhances the autophosphorylation activity of SasA, which then transfers its phosphate group to RpaA to activate it. In addition to its output function, recruits fold-shifted KaiB (KaiB(fs)) to KaiC to cooperatively form the KaiB(6):KaiC(6) complex (independent of SasA kinase activity). Required for robustness of the circadian rhythm of gene expression and is involved in clock output, also required for adaptation to light/dark cycles.</text>
</comment>
<comment type="catalytic activity">
    <reaction evidence="1">
        <text>ATP + protein L-histidine = ADP + protein N-phospho-L-histidine.</text>
        <dbReference type="EC" id="2.7.13.3"/>
    </reaction>
</comment>
<comment type="subunit">
    <text evidence="1">Homooligomerizes. Interacts with KaiC. Participates in the KaiBC complex, whose core is composed of a KaiC homohexamer and 6 KaiB.</text>
</comment>
<comment type="domain">
    <text evidence="1">The N-terminus interacts with KaiC, while the C-terminal histidine kinase domain autophosphorylates and is probably responsible for self-oligomerization. The N-terminal domain stimulates the C-terminus to autophosphorylate.</text>
</comment>
<name>SASA_PROMP</name>
<sequence>MNEKKELKLILVAARNHLSRGDLKLLLSYLESDDCEFEISLQISEPTEQPELLELHRLVAIPALIKVSPAPKQIFAGSNIFVQLQTWLPRWKQEGVTKDLGINLQPSKIDSIRTQKEFLLEEELLVLRQENETLTKRIESQERLLRMVAHELRTPLTAATLAIQSQKLGQIDIKKLQDVIKRRLEEIELLSQDLLEVGTTKWEALFNPQKIDLGNISAEAILELEKFWRLRKIEIDTDIPSDLPSVYADQRRMRQVFLNLIENALKFSENSGRIKITLIHKTNQWVEITICDKGAGIPVSEQKRIFLDRVRLPQTSEGTSGFGIGLSVCRRIVEVHGGRIWVVSEVGEGSCFHFTVPVWQGQNKDQQHLTKG</sequence>
<dbReference type="EC" id="2.7.13.3" evidence="1"/>
<dbReference type="EMBL" id="BX548174">
    <property type="protein sequence ID" value="CAE19536.1"/>
    <property type="molecule type" value="Genomic_DNA"/>
</dbReference>
<dbReference type="RefSeq" id="WP_011132710.1">
    <property type="nucleotide sequence ID" value="NC_005072.1"/>
</dbReference>
<dbReference type="SMR" id="Q7V113"/>
<dbReference type="STRING" id="59919.PMM1077"/>
<dbReference type="KEGG" id="pmm:PMM1077"/>
<dbReference type="eggNOG" id="COG2205">
    <property type="taxonomic scope" value="Bacteria"/>
</dbReference>
<dbReference type="HOGENOM" id="CLU_723030_0_0_3"/>
<dbReference type="OrthoDB" id="9773956at2"/>
<dbReference type="Proteomes" id="UP000001026">
    <property type="component" value="Chromosome"/>
</dbReference>
<dbReference type="GO" id="GO:0005524">
    <property type="term" value="F:ATP binding"/>
    <property type="evidence" value="ECO:0007669"/>
    <property type="project" value="UniProtKB-KW"/>
</dbReference>
<dbReference type="GO" id="GO:0000155">
    <property type="term" value="F:phosphorelay sensor kinase activity"/>
    <property type="evidence" value="ECO:0007669"/>
    <property type="project" value="InterPro"/>
</dbReference>
<dbReference type="GO" id="GO:0007623">
    <property type="term" value="P:circadian rhythm"/>
    <property type="evidence" value="ECO:0007669"/>
    <property type="project" value="UniProtKB-UniRule"/>
</dbReference>
<dbReference type="CDD" id="cd00075">
    <property type="entry name" value="HATPase"/>
    <property type="match status" value="1"/>
</dbReference>
<dbReference type="CDD" id="cd00082">
    <property type="entry name" value="HisKA"/>
    <property type="match status" value="1"/>
</dbReference>
<dbReference type="FunFam" id="3.30.565.10:FF:000006">
    <property type="entry name" value="Sensor histidine kinase WalK"/>
    <property type="match status" value="1"/>
</dbReference>
<dbReference type="Gene3D" id="1.10.287.130">
    <property type="match status" value="1"/>
</dbReference>
<dbReference type="Gene3D" id="3.40.30.10">
    <property type="entry name" value="Glutaredoxin"/>
    <property type="match status" value="1"/>
</dbReference>
<dbReference type="Gene3D" id="3.30.565.10">
    <property type="entry name" value="Histidine kinase-like ATPase, C-terminal domain"/>
    <property type="match status" value="1"/>
</dbReference>
<dbReference type="HAMAP" id="MF_01837">
    <property type="entry name" value="Kinase_SasA"/>
    <property type="match status" value="1"/>
</dbReference>
<dbReference type="InterPro" id="IPR036890">
    <property type="entry name" value="HATPase_C_sf"/>
</dbReference>
<dbReference type="InterPro" id="IPR005467">
    <property type="entry name" value="His_kinase_dom"/>
</dbReference>
<dbReference type="InterPro" id="IPR003661">
    <property type="entry name" value="HisK_dim/P_dom"/>
</dbReference>
<dbReference type="InterPro" id="IPR036097">
    <property type="entry name" value="HisK_dim/P_sf"/>
</dbReference>
<dbReference type="InterPro" id="IPR011649">
    <property type="entry name" value="KaiB_domain"/>
</dbReference>
<dbReference type="InterPro" id="IPR023527">
    <property type="entry name" value="Kinase_SasA"/>
</dbReference>
<dbReference type="InterPro" id="IPR004358">
    <property type="entry name" value="Sig_transdc_His_kin-like_C"/>
</dbReference>
<dbReference type="InterPro" id="IPR036249">
    <property type="entry name" value="Thioredoxin-like_sf"/>
</dbReference>
<dbReference type="NCBIfam" id="NF006800">
    <property type="entry name" value="PRK09303.1"/>
    <property type="match status" value="1"/>
</dbReference>
<dbReference type="PANTHER" id="PTHR43547:SF2">
    <property type="entry name" value="HYBRID SIGNAL TRANSDUCTION HISTIDINE KINASE C"/>
    <property type="match status" value="1"/>
</dbReference>
<dbReference type="PANTHER" id="PTHR43547">
    <property type="entry name" value="TWO-COMPONENT HISTIDINE KINASE"/>
    <property type="match status" value="1"/>
</dbReference>
<dbReference type="Pfam" id="PF02518">
    <property type="entry name" value="HATPase_c"/>
    <property type="match status" value="1"/>
</dbReference>
<dbReference type="Pfam" id="PF00512">
    <property type="entry name" value="HisKA"/>
    <property type="match status" value="1"/>
</dbReference>
<dbReference type="Pfam" id="PF07689">
    <property type="entry name" value="KaiB"/>
    <property type="match status" value="1"/>
</dbReference>
<dbReference type="PRINTS" id="PR00344">
    <property type="entry name" value="BCTRLSENSOR"/>
</dbReference>
<dbReference type="SMART" id="SM00387">
    <property type="entry name" value="HATPase_c"/>
    <property type="match status" value="1"/>
</dbReference>
<dbReference type="SMART" id="SM00388">
    <property type="entry name" value="HisKA"/>
    <property type="match status" value="1"/>
</dbReference>
<dbReference type="SMART" id="SM01248">
    <property type="entry name" value="KaiB"/>
    <property type="match status" value="1"/>
</dbReference>
<dbReference type="SUPFAM" id="SSF55874">
    <property type="entry name" value="ATPase domain of HSP90 chaperone/DNA topoisomerase II/histidine kinase"/>
    <property type="match status" value="1"/>
</dbReference>
<dbReference type="SUPFAM" id="SSF47384">
    <property type="entry name" value="Homodimeric domain of signal transducing histidine kinase"/>
    <property type="match status" value="1"/>
</dbReference>
<dbReference type="SUPFAM" id="SSF52833">
    <property type="entry name" value="Thioredoxin-like"/>
    <property type="match status" value="1"/>
</dbReference>
<dbReference type="PROSITE" id="PS50109">
    <property type="entry name" value="HIS_KIN"/>
    <property type="match status" value="1"/>
</dbReference>
<accession>Q7V113</accession>
<evidence type="ECO:0000255" key="1">
    <source>
        <dbReference type="HAMAP-Rule" id="MF_01837"/>
    </source>
</evidence>
<feature type="chain" id="PRO_0000074870" description="Adaptive-response sensory-kinase SasA">
    <location>
        <begin position="1"/>
        <end position="372"/>
    </location>
</feature>
<feature type="domain" description="Histidine kinase" evidence="1">
    <location>
        <begin position="147"/>
        <end position="360"/>
    </location>
</feature>
<feature type="modified residue" description="Phosphohistidine; by autocatalysis" evidence="1">
    <location>
        <position position="150"/>
    </location>
</feature>
<protein>
    <recommendedName>
        <fullName evidence="1">Adaptive-response sensory-kinase SasA</fullName>
        <ecNumber evidence="1">2.7.13.3</ecNumber>
    </recommendedName>
    <alternativeName>
        <fullName evidence="1">Sensor histidine kinase SasA</fullName>
    </alternativeName>
</protein>
<organism>
    <name type="scientific">Prochlorococcus marinus subsp. pastoris (strain CCMP1986 / NIES-2087 / MED4)</name>
    <dbReference type="NCBI Taxonomy" id="59919"/>
    <lineage>
        <taxon>Bacteria</taxon>
        <taxon>Bacillati</taxon>
        <taxon>Cyanobacteriota</taxon>
        <taxon>Cyanophyceae</taxon>
        <taxon>Synechococcales</taxon>
        <taxon>Prochlorococcaceae</taxon>
        <taxon>Prochlorococcus</taxon>
    </lineage>
</organism>
<gene>
    <name evidence="1" type="primary">sasA</name>
    <name type="ordered locus">PMM1077</name>
</gene>
<reference key="1">
    <citation type="journal article" date="2003" name="Nature">
        <title>Genome divergence in two Prochlorococcus ecotypes reflects oceanic niche differentiation.</title>
        <authorList>
            <person name="Rocap G."/>
            <person name="Larimer F.W."/>
            <person name="Lamerdin J.E."/>
            <person name="Malfatti S."/>
            <person name="Chain P."/>
            <person name="Ahlgren N.A."/>
            <person name="Arellano A."/>
            <person name="Coleman M."/>
            <person name="Hauser L."/>
            <person name="Hess W.R."/>
            <person name="Johnson Z.I."/>
            <person name="Land M.L."/>
            <person name="Lindell D."/>
            <person name="Post A.F."/>
            <person name="Regala W."/>
            <person name="Shah M."/>
            <person name="Shaw S.L."/>
            <person name="Steglich C."/>
            <person name="Sullivan M.B."/>
            <person name="Ting C.S."/>
            <person name="Tolonen A."/>
            <person name="Webb E.A."/>
            <person name="Zinser E.R."/>
            <person name="Chisholm S.W."/>
        </authorList>
    </citation>
    <scope>NUCLEOTIDE SEQUENCE [LARGE SCALE GENOMIC DNA]</scope>
    <source>
        <strain>CCMP1986 / NIES-2087 / MED4</strain>
    </source>
</reference>
<proteinExistence type="inferred from homology"/>